<accession>B5RE27</accession>
<comment type="function">
    <text evidence="1">Involved in the export of arginine. Important to control the intracellular level of arginine and the correct balance between arginine and lysine.</text>
</comment>
<comment type="catalytic activity">
    <reaction evidence="1">
        <text>L-arginine(in) = L-arginine(out)</text>
        <dbReference type="Rhea" id="RHEA:32143"/>
        <dbReference type="ChEBI" id="CHEBI:32682"/>
    </reaction>
    <physiologicalReaction direction="left-to-right" evidence="1">
        <dbReference type="Rhea" id="RHEA:32144"/>
    </physiologicalReaction>
</comment>
<comment type="subcellular location">
    <subcellularLocation>
        <location evidence="1">Cell inner membrane</location>
        <topology evidence="1">Multi-pass membrane protein</topology>
    </subcellularLocation>
</comment>
<comment type="similarity">
    <text evidence="1">Belongs to the LysE/ArgO transporter (TC 2.A.75) family.</text>
</comment>
<evidence type="ECO:0000255" key="1">
    <source>
        <dbReference type="HAMAP-Rule" id="MF_01901"/>
    </source>
</evidence>
<proteinExistence type="inferred from homology"/>
<reference key="1">
    <citation type="journal article" date="2008" name="Genome Res.">
        <title>Comparative genome analysis of Salmonella enteritidis PT4 and Salmonella gallinarum 287/91 provides insights into evolutionary and host adaptation pathways.</title>
        <authorList>
            <person name="Thomson N.R."/>
            <person name="Clayton D.J."/>
            <person name="Windhorst D."/>
            <person name="Vernikos G."/>
            <person name="Davidson S."/>
            <person name="Churcher C."/>
            <person name="Quail M.A."/>
            <person name="Stevens M."/>
            <person name="Jones M.A."/>
            <person name="Watson M."/>
            <person name="Barron A."/>
            <person name="Layton A."/>
            <person name="Pickard D."/>
            <person name="Kingsley R.A."/>
            <person name="Bignell A."/>
            <person name="Clark L."/>
            <person name="Harris B."/>
            <person name="Ormond D."/>
            <person name="Abdellah Z."/>
            <person name="Brooks K."/>
            <person name="Cherevach I."/>
            <person name="Chillingworth T."/>
            <person name="Woodward J."/>
            <person name="Norberczak H."/>
            <person name="Lord A."/>
            <person name="Arrowsmith C."/>
            <person name="Jagels K."/>
            <person name="Moule S."/>
            <person name="Mungall K."/>
            <person name="Saunders M."/>
            <person name="Whitehead S."/>
            <person name="Chabalgoity J.A."/>
            <person name="Maskell D."/>
            <person name="Humphreys T."/>
            <person name="Roberts M."/>
            <person name="Barrow P.A."/>
            <person name="Dougan G."/>
            <person name="Parkhill J."/>
        </authorList>
    </citation>
    <scope>NUCLEOTIDE SEQUENCE [LARGE SCALE GENOMIC DNA]</scope>
    <source>
        <strain>287/91 / NCTC 13346</strain>
    </source>
</reference>
<gene>
    <name evidence="1" type="primary">argO</name>
    <name type="ordered locus">SG2961</name>
</gene>
<protein>
    <recommendedName>
        <fullName evidence="1">Arginine exporter protein ArgO</fullName>
    </recommendedName>
</protein>
<organism>
    <name type="scientific">Salmonella gallinarum (strain 287/91 / NCTC 13346)</name>
    <dbReference type="NCBI Taxonomy" id="550538"/>
    <lineage>
        <taxon>Bacteria</taxon>
        <taxon>Pseudomonadati</taxon>
        <taxon>Pseudomonadota</taxon>
        <taxon>Gammaproteobacteria</taxon>
        <taxon>Enterobacterales</taxon>
        <taxon>Enterobacteriaceae</taxon>
        <taxon>Salmonella</taxon>
    </lineage>
</organism>
<dbReference type="EMBL" id="AM933173">
    <property type="protein sequence ID" value="CAR38766.1"/>
    <property type="molecule type" value="Genomic_DNA"/>
</dbReference>
<dbReference type="RefSeq" id="WP_000626870.1">
    <property type="nucleotide sequence ID" value="NC_011274.1"/>
</dbReference>
<dbReference type="KEGG" id="seg:SG2961"/>
<dbReference type="HOGENOM" id="CLU_087840_0_1_6"/>
<dbReference type="Proteomes" id="UP000008321">
    <property type="component" value="Chromosome"/>
</dbReference>
<dbReference type="GO" id="GO:0005886">
    <property type="term" value="C:plasma membrane"/>
    <property type="evidence" value="ECO:0007669"/>
    <property type="project" value="UniProtKB-SubCell"/>
</dbReference>
<dbReference type="GO" id="GO:0061459">
    <property type="term" value="F:L-arginine transmembrane transporter activity"/>
    <property type="evidence" value="ECO:0007669"/>
    <property type="project" value="UniProtKB-UniRule"/>
</dbReference>
<dbReference type="HAMAP" id="MF_01901">
    <property type="entry name" value="ArgO"/>
    <property type="match status" value="1"/>
</dbReference>
<dbReference type="InterPro" id="IPR023445">
    <property type="entry name" value="Arg_export_ArgO_enterobac"/>
</dbReference>
<dbReference type="InterPro" id="IPR001123">
    <property type="entry name" value="LeuE-type"/>
</dbReference>
<dbReference type="InterPro" id="IPR004777">
    <property type="entry name" value="Lys/arg_exporter"/>
</dbReference>
<dbReference type="NCBIfam" id="TIGR00948">
    <property type="entry name" value="2a75"/>
    <property type="match status" value="1"/>
</dbReference>
<dbReference type="NCBIfam" id="NF006801">
    <property type="entry name" value="PRK09304.1"/>
    <property type="match status" value="1"/>
</dbReference>
<dbReference type="PANTHER" id="PTHR30086">
    <property type="entry name" value="ARGININE EXPORTER PROTEIN ARGO"/>
    <property type="match status" value="1"/>
</dbReference>
<dbReference type="PANTHER" id="PTHR30086:SF20">
    <property type="entry name" value="ARGININE EXPORTER PROTEIN ARGO-RELATED"/>
    <property type="match status" value="1"/>
</dbReference>
<dbReference type="Pfam" id="PF01810">
    <property type="entry name" value="LysE"/>
    <property type="match status" value="1"/>
</dbReference>
<name>ARGO_SALG2</name>
<feature type="chain" id="PRO_1000188720" description="Arginine exporter protein ArgO">
    <location>
        <begin position="1"/>
        <end position="211"/>
    </location>
</feature>
<feature type="transmembrane region" description="Helical" evidence="1">
    <location>
        <begin position="1"/>
        <end position="21"/>
    </location>
</feature>
<feature type="transmembrane region" description="Helical" evidence="1">
    <location>
        <begin position="37"/>
        <end position="57"/>
    </location>
</feature>
<feature type="transmembrane region" description="Helical" evidence="1">
    <location>
        <begin position="68"/>
        <end position="88"/>
    </location>
</feature>
<feature type="transmembrane region" description="Helical" evidence="1">
    <location>
        <begin position="111"/>
        <end position="131"/>
    </location>
</feature>
<feature type="transmembrane region" description="Helical" evidence="1">
    <location>
        <begin position="147"/>
        <end position="167"/>
    </location>
</feature>
<feature type="transmembrane region" description="Helical" evidence="1">
    <location>
        <begin position="179"/>
        <end position="199"/>
    </location>
</feature>
<keyword id="KW-0029">Amino-acid transport</keyword>
<keyword id="KW-0997">Cell inner membrane</keyword>
<keyword id="KW-1003">Cell membrane</keyword>
<keyword id="KW-0472">Membrane</keyword>
<keyword id="KW-0812">Transmembrane</keyword>
<keyword id="KW-1133">Transmembrane helix</keyword>
<keyword id="KW-0813">Transport</keyword>
<sequence>MISYYFQGFALGAAMILPLGPQNAFVMNQGIRRQYHLMIALLCALSDLVLISAGIFGGSALLMQSPWLLALVTWGGVAFLLWYGLGALKTAMSSNLELASAEVMKQGRWKIIATMLAVTWLNPHVYLDTFVVLGSLGGQLAMEPKRWFALGTISASFLWFFGLALLAAWLAPRLRTAKAQRIINILVGVVMWLIAFQLAREGVAHMHALFN</sequence>